<organism>
    <name type="scientific">Gallus gallus</name>
    <name type="common">Chicken</name>
    <dbReference type="NCBI Taxonomy" id="9031"/>
    <lineage>
        <taxon>Eukaryota</taxon>
        <taxon>Metazoa</taxon>
        <taxon>Chordata</taxon>
        <taxon>Craniata</taxon>
        <taxon>Vertebrata</taxon>
        <taxon>Euteleostomi</taxon>
        <taxon>Archelosauria</taxon>
        <taxon>Archosauria</taxon>
        <taxon>Dinosauria</taxon>
        <taxon>Saurischia</taxon>
        <taxon>Theropoda</taxon>
        <taxon>Coelurosauria</taxon>
        <taxon>Aves</taxon>
        <taxon>Neognathae</taxon>
        <taxon>Galloanserae</taxon>
        <taxon>Galliformes</taxon>
        <taxon>Phasianidae</taxon>
        <taxon>Phasianinae</taxon>
        <taxon>Gallus</taxon>
    </lineage>
</organism>
<name>FBF1_CHICK</name>
<comment type="function">
    <text evidence="1">Keratin-binding protein required for epithelial cell polarization. Required for ciliogenesis (By similarity).</text>
</comment>
<comment type="subcellular location">
    <subcellularLocation>
        <location evidence="1">Cytoplasm</location>
        <location evidence="1">Cytoskeleton</location>
        <location evidence="1">Microtubule organizing center</location>
        <location evidence="1">Centrosome</location>
        <location evidence="1">Centriole</location>
    </subcellularLocation>
    <subcellularLocation>
        <location>Cytoplasm</location>
        <location>Cytoskeleton</location>
        <location>Spindle pole</location>
    </subcellularLocation>
    <subcellularLocation>
        <location evidence="1">Cell junction</location>
    </subcellularLocation>
    <text evidence="1">Localizes specifically to the distal appendage region of the centriole, which anchors the mother centriole to the plasma membrane. Localizes to the apical junction complex (AJC) in epithelial cells (By similarity).</text>
</comment>
<proteinExistence type="evidence at transcript level"/>
<evidence type="ECO:0000250" key="1"/>
<evidence type="ECO:0000255" key="2"/>
<evidence type="ECO:0000256" key="3">
    <source>
        <dbReference type="SAM" id="MobiDB-lite"/>
    </source>
</evidence>
<sequence>MATKSKSSVRGSIDDVLDDLLGYDDEGPAKSSQPAGVSSGRARGSSLQASKKSFLEDDFFSKLPAEDMEAAEGSSISDADPQAVLQTLKEMDDMEADLLGMSKPSSGLGKAATKGPGKFSTSEGAVKTSGKMPAPEKGESAPEMDKKPLSSPPTSRQYRKFNFEDVDDPLAGLLSEEEQDAPRKPSPKGSERRPERKTELGKEKDPLPPQTPLHTTAPARRREELTFEDDDDDMMDVLGFGDGQKGDQKHGKKAEEEEVRPARSKLDELLGRGSVAKILERPGAGEHREFKLDKKYQKQPEKEEGWDEEDFVFGAYQPTVATTPEGRPSRRQSVSRFSAENSSEPKPDPHSKPPPAASQSPARGSRAGGDWLGLKDEDFLDSEPPSPAKTSPVVSSQQLLAKEQATSKPNQLEEDNWLSAALSRKKAQAQVKAQERGAVPLETTGKGLDPSPAVSQPATSTGAAAQAAALQDKAASADSSGHPVPWLSTVTQTSAHPPEPAKRDPLRDVSPSDPAASSPAEQGMQGPAPLAQVTMPSTPLQAASQLQAESPPLGSVHERRPGAPTGQSYEDATGCRAALLSAQARVAELESQVRMLELERTQHKLLLESLQQRHQEDLDLLESAHRSRVKVVEETYGQREERLRREKEQLEAQLLSQSQDAERARADLVAQHKQRVATLEQQSAQELERLRELQRSSVQEMLKDHEEQLQRLKRLKDQEIDAVTSATSHTRSLNGVIEQMERFSSDLHSLSHKVEATHHTTSQELAMGARQRDEQLKVLQDRLSQQQRDMEEERSRLQEVIAKMEARLSEQTRLLEQERWRVTAVQSKVESLQRSLEEQRRLMTQQLSMERAELERAKSALLEEQKSVMQKCSEERRKLAVEWAEFHTQQQLSKERMERDIDRALQLDSQREGTIMSLAKEQAELKVRSRELKVKEEQLARDRLLLDEAWHELRLEKEKVKGATLRIRQQEEEIKNMSKLSAQKYEEGERALQDACRIESEHQARLQVMQQHLEQLKQQEQHLQQERLSMAHQRRQLEQLHKKLPNNPTLLLTTDQDLSASTKGLSSTLSFPPPIRTLPGHRSVGTTASMELYAKLLVLKHRAQQDRNFLEDEQLFLETLKKASYNTSPLSV</sequence>
<gene>
    <name type="primary">FBF1</name>
    <name type="ORF">RCJMB04_28i8</name>
</gene>
<reference key="1">
    <citation type="journal article" date="2005" name="Genome Biol.">
        <title>Full-length cDNAs from chicken bursal lymphocytes to facilitate gene function analysis.</title>
        <authorList>
            <person name="Caldwell R.B."/>
            <person name="Kierzek A.M."/>
            <person name="Arakawa H."/>
            <person name="Bezzubov Y."/>
            <person name="Zaim J."/>
            <person name="Fiedler P."/>
            <person name="Kutter S."/>
            <person name="Blagodatski A."/>
            <person name="Kostovska D."/>
            <person name="Koter M."/>
            <person name="Plachy J."/>
            <person name="Carninci P."/>
            <person name="Hayashizaki Y."/>
            <person name="Buerstedde J.-M."/>
        </authorList>
    </citation>
    <scope>NUCLEOTIDE SEQUENCE [LARGE SCALE MRNA]</scope>
    <source>
        <strain>CB</strain>
        <tissue>Bursa of Fabricius</tissue>
    </source>
</reference>
<protein>
    <recommendedName>
        <fullName>Fas-binding factor 1 homolog</fullName>
        <shortName>FBF-1</shortName>
    </recommendedName>
</protein>
<keyword id="KW-0965">Cell junction</keyword>
<keyword id="KW-0970">Cilium biogenesis/degradation</keyword>
<keyword id="KW-0175">Coiled coil</keyword>
<keyword id="KW-0963">Cytoplasm</keyword>
<keyword id="KW-0206">Cytoskeleton</keyword>
<keyword id="KW-1185">Reference proteome</keyword>
<feature type="chain" id="PRO_0000297648" description="Fas-binding factor 1 homolog">
    <location>
        <begin position="1"/>
        <end position="1132"/>
    </location>
</feature>
<feature type="region of interest" description="Disordered" evidence="3">
    <location>
        <begin position="18"/>
        <end position="50"/>
    </location>
</feature>
<feature type="region of interest" description="Disordered" evidence="3">
    <location>
        <begin position="65"/>
        <end position="84"/>
    </location>
</feature>
<feature type="region of interest" description="Disordered" evidence="3">
    <location>
        <begin position="89"/>
        <end position="570"/>
    </location>
</feature>
<feature type="coiled-coil region" evidence="2">
    <location>
        <begin position="576"/>
        <end position="727"/>
    </location>
</feature>
<feature type="coiled-coil region" evidence="2">
    <location>
        <begin position="769"/>
        <end position="882"/>
    </location>
</feature>
<feature type="coiled-coil region" evidence="2">
    <location>
        <begin position="918"/>
        <end position="1044"/>
    </location>
</feature>
<feature type="compositionally biased region" description="Low complexity" evidence="3">
    <location>
        <begin position="35"/>
        <end position="46"/>
    </location>
</feature>
<feature type="compositionally biased region" description="Basic and acidic residues" evidence="3">
    <location>
        <begin position="134"/>
        <end position="148"/>
    </location>
</feature>
<feature type="compositionally biased region" description="Basic and acidic residues" evidence="3">
    <location>
        <begin position="189"/>
        <end position="206"/>
    </location>
</feature>
<feature type="compositionally biased region" description="Acidic residues" evidence="3">
    <location>
        <begin position="226"/>
        <end position="235"/>
    </location>
</feature>
<feature type="compositionally biased region" description="Basic and acidic residues" evidence="3">
    <location>
        <begin position="244"/>
        <end position="270"/>
    </location>
</feature>
<feature type="compositionally biased region" description="Basic and acidic residues" evidence="3">
    <location>
        <begin position="278"/>
        <end position="303"/>
    </location>
</feature>
<feature type="compositionally biased region" description="Polar residues" evidence="3">
    <location>
        <begin position="331"/>
        <end position="341"/>
    </location>
</feature>
<feature type="compositionally biased region" description="Polar residues" evidence="3">
    <location>
        <begin position="388"/>
        <end position="410"/>
    </location>
</feature>
<feature type="compositionally biased region" description="Low complexity" evidence="3">
    <location>
        <begin position="458"/>
        <end position="480"/>
    </location>
</feature>
<feature type="compositionally biased region" description="Low complexity" evidence="3">
    <location>
        <begin position="511"/>
        <end position="520"/>
    </location>
</feature>
<feature type="compositionally biased region" description="Polar residues" evidence="3">
    <location>
        <begin position="534"/>
        <end position="548"/>
    </location>
</feature>
<dbReference type="EMBL" id="AJ720872">
    <property type="protein sequence ID" value="CAG32531.1"/>
    <property type="molecule type" value="mRNA"/>
</dbReference>
<dbReference type="RefSeq" id="NP_001108102.1">
    <property type="nucleotide sequence ID" value="NM_001114630.1"/>
</dbReference>
<dbReference type="SMR" id="Q5ZIB2"/>
<dbReference type="FunCoup" id="Q5ZIB2">
    <property type="interactions" value="1739"/>
</dbReference>
<dbReference type="STRING" id="9031.ENSGALP00000003408"/>
<dbReference type="PaxDb" id="9031-ENSGALP00000003408"/>
<dbReference type="GeneID" id="770159"/>
<dbReference type="KEGG" id="gga:770159"/>
<dbReference type="CTD" id="85302"/>
<dbReference type="VEuPathDB" id="HostDB:geneid_770159"/>
<dbReference type="eggNOG" id="ENOG502QQFR">
    <property type="taxonomic scope" value="Eukaryota"/>
</dbReference>
<dbReference type="InParanoid" id="Q5ZIB2"/>
<dbReference type="OrthoDB" id="8195456at2759"/>
<dbReference type="PhylomeDB" id="Q5ZIB2"/>
<dbReference type="PRO" id="PR:Q5ZIB2"/>
<dbReference type="Proteomes" id="UP000000539">
    <property type="component" value="Unassembled WGS sequence"/>
</dbReference>
<dbReference type="GO" id="GO:0070161">
    <property type="term" value="C:anchoring junction"/>
    <property type="evidence" value="ECO:0007669"/>
    <property type="project" value="UniProtKB-SubCell"/>
</dbReference>
<dbReference type="GO" id="GO:0005814">
    <property type="term" value="C:centriole"/>
    <property type="evidence" value="ECO:0000250"/>
    <property type="project" value="UniProtKB"/>
</dbReference>
<dbReference type="GO" id="GO:0036064">
    <property type="term" value="C:ciliary basal body"/>
    <property type="evidence" value="ECO:0000318"/>
    <property type="project" value="GO_Central"/>
</dbReference>
<dbReference type="GO" id="GO:0097539">
    <property type="term" value="C:ciliary transition fiber"/>
    <property type="evidence" value="ECO:0007669"/>
    <property type="project" value="InterPro"/>
</dbReference>
<dbReference type="GO" id="GO:0005737">
    <property type="term" value="C:cytoplasm"/>
    <property type="evidence" value="ECO:0007669"/>
    <property type="project" value="UniProtKB-KW"/>
</dbReference>
<dbReference type="GO" id="GO:0000922">
    <property type="term" value="C:spindle pole"/>
    <property type="evidence" value="ECO:0000250"/>
    <property type="project" value="UniProtKB"/>
</dbReference>
<dbReference type="GO" id="GO:0043297">
    <property type="term" value="P:apical junction assembly"/>
    <property type="evidence" value="ECO:0000250"/>
    <property type="project" value="UniProtKB"/>
</dbReference>
<dbReference type="GO" id="GO:0060271">
    <property type="term" value="P:cilium assembly"/>
    <property type="evidence" value="ECO:0000250"/>
    <property type="project" value="UniProtKB"/>
</dbReference>
<dbReference type="GO" id="GO:0090162">
    <property type="term" value="P:establishment of epithelial cell polarity"/>
    <property type="evidence" value="ECO:0000250"/>
    <property type="project" value="UniProtKB"/>
</dbReference>
<dbReference type="InterPro" id="IPR033561">
    <property type="entry name" value="FBF1"/>
</dbReference>
<dbReference type="InterPro" id="IPR049390">
    <property type="entry name" value="FBF1_C"/>
</dbReference>
<dbReference type="PANTHER" id="PTHR33689">
    <property type="entry name" value="FAS-BINDING FACTOR 1"/>
    <property type="match status" value="1"/>
</dbReference>
<dbReference type="PANTHER" id="PTHR33689:SF1">
    <property type="entry name" value="FAS-BINDING FACTOR 1"/>
    <property type="match status" value="1"/>
</dbReference>
<dbReference type="Pfam" id="PF21007">
    <property type="entry name" value="FBF1"/>
    <property type="match status" value="1"/>
</dbReference>
<accession>Q5ZIB2</accession>